<reference key="1">
    <citation type="submission" date="2006-03" db="EMBL/GenBank/DDBJ databases">
        <title>Complete sequence of Shewanella denitrificans OS217.</title>
        <authorList>
            <consortium name="US DOE Joint Genome Institute"/>
            <person name="Copeland A."/>
            <person name="Lucas S."/>
            <person name="Lapidus A."/>
            <person name="Barry K."/>
            <person name="Detter J.C."/>
            <person name="Glavina del Rio T."/>
            <person name="Hammon N."/>
            <person name="Israni S."/>
            <person name="Dalin E."/>
            <person name="Tice H."/>
            <person name="Pitluck S."/>
            <person name="Brettin T."/>
            <person name="Bruce D."/>
            <person name="Han C."/>
            <person name="Tapia R."/>
            <person name="Gilna P."/>
            <person name="Kiss H."/>
            <person name="Schmutz J."/>
            <person name="Larimer F."/>
            <person name="Land M."/>
            <person name="Hauser L."/>
            <person name="Kyrpides N."/>
            <person name="Lykidis A."/>
            <person name="Richardson P."/>
        </authorList>
    </citation>
    <scope>NUCLEOTIDE SEQUENCE [LARGE SCALE GENOMIC DNA]</scope>
    <source>
        <strain>OS217 / ATCC BAA-1090 / DSM 15013</strain>
    </source>
</reference>
<feature type="chain" id="PRO_1000069541" description="NAD-dependent malic enzyme">
    <location>
        <begin position="1"/>
        <end position="562"/>
    </location>
</feature>
<feature type="active site" description="Proton donor" evidence="1">
    <location>
        <position position="101"/>
    </location>
</feature>
<feature type="active site" description="Proton acceptor" evidence="1">
    <location>
        <position position="172"/>
    </location>
</feature>
<feature type="binding site" evidence="1">
    <location>
        <position position="154"/>
    </location>
    <ligand>
        <name>NAD(+)</name>
        <dbReference type="ChEBI" id="CHEBI:57540"/>
    </ligand>
</feature>
<feature type="binding site" evidence="1">
    <location>
        <position position="243"/>
    </location>
    <ligand>
        <name>a divalent metal cation</name>
        <dbReference type="ChEBI" id="CHEBI:60240"/>
    </ligand>
</feature>
<feature type="binding site" evidence="1">
    <location>
        <position position="244"/>
    </location>
    <ligand>
        <name>a divalent metal cation</name>
        <dbReference type="ChEBI" id="CHEBI:60240"/>
    </ligand>
</feature>
<feature type="binding site" evidence="1">
    <location>
        <position position="267"/>
    </location>
    <ligand>
        <name>a divalent metal cation</name>
        <dbReference type="ChEBI" id="CHEBI:60240"/>
    </ligand>
</feature>
<feature type="binding site" evidence="1">
    <location>
        <position position="267"/>
    </location>
    <ligand>
        <name>NAD(+)</name>
        <dbReference type="ChEBI" id="CHEBI:57540"/>
    </ligand>
</feature>
<feature type="binding site" evidence="1">
    <location>
        <position position="415"/>
    </location>
    <ligand>
        <name>NAD(+)</name>
        <dbReference type="ChEBI" id="CHEBI:57540"/>
    </ligand>
</feature>
<feature type="site" description="Important for activity" evidence="1">
    <location>
        <position position="267"/>
    </location>
</feature>
<sequence>MDDTKRPLYLPFAGPAILEAPLINKGSAFSEEERIFFNLEGLLPYVIETIEEQAARAYAQFSNFSNDLDKHIYLRNIQDTNETLFYRLVRNNITEMMPIIYTPTVGLACERFSKNYRRNRGLFISYSNKDRIDDILNNSTRHKVKVIVVTDGERILGLGDQGIGGMGIPIGKLSLYTSCGGISPAYTLPITLDVGTDNQELLDDPMYMGWRHRRIEGQDYADFVEAFMEAVHRRWPDVLIQFEDFAQRNAMPLLERYKDQYCCFNDDIQGTAAVTVGSLLAASKAANTQLSKQRVVFLGAGSAGCGIAEAIVAQMISEGISEAQARSQVFMVDRLGLLQDNTANLLPFQQKLAQSSATVSQWHIEGDSVSLLNVINNAKPTVLIGVSGSPGQFTEAVIRAMHLHCPRPIVFPLSNPTSRVEATPEDVLNWTNGQALVATGSPFEPVTIGDETFEIAQCNNSFIFPGIGLGVLACRAKRVSDEMLMASSRALAECSPLGTTRTGSLLPKLDDIQKVSKYIAFAVAKVAMAQGLALPLTDELLNKSIEKNFWEPKYRRYKRTSF</sequence>
<dbReference type="EC" id="1.1.1.38" evidence="1"/>
<dbReference type="EMBL" id="CP000302">
    <property type="protein sequence ID" value="ABE54026.1"/>
    <property type="molecule type" value="Genomic_DNA"/>
</dbReference>
<dbReference type="RefSeq" id="WP_011495191.1">
    <property type="nucleotide sequence ID" value="NC_007954.1"/>
</dbReference>
<dbReference type="SMR" id="Q12RA0"/>
<dbReference type="STRING" id="318161.Sden_0736"/>
<dbReference type="KEGG" id="sdn:Sden_0736"/>
<dbReference type="eggNOG" id="COG0281">
    <property type="taxonomic scope" value="Bacteria"/>
</dbReference>
<dbReference type="HOGENOM" id="CLU_011405_5_2_6"/>
<dbReference type="OrthoDB" id="3314528at2"/>
<dbReference type="Proteomes" id="UP000001982">
    <property type="component" value="Chromosome"/>
</dbReference>
<dbReference type="GO" id="GO:0005829">
    <property type="term" value="C:cytosol"/>
    <property type="evidence" value="ECO:0007669"/>
    <property type="project" value="TreeGrafter"/>
</dbReference>
<dbReference type="GO" id="GO:0004471">
    <property type="term" value="F:malate dehydrogenase (decarboxylating) (NAD+) activity"/>
    <property type="evidence" value="ECO:0007669"/>
    <property type="project" value="UniProtKB-UniRule"/>
</dbReference>
<dbReference type="GO" id="GO:0046872">
    <property type="term" value="F:metal ion binding"/>
    <property type="evidence" value="ECO:0007669"/>
    <property type="project" value="UniProtKB-KW"/>
</dbReference>
<dbReference type="GO" id="GO:0051287">
    <property type="term" value="F:NAD binding"/>
    <property type="evidence" value="ECO:0007669"/>
    <property type="project" value="InterPro"/>
</dbReference>
<dbReference type="GO" id="GO:0008948">
    <property type="term" value="F:oxaloacetate decarboxylase activity"/>
    <property type="evidence" value="ECO:0007669"/>
    <property type="project" value="UniProtKB-UniRule"/>
</dbReference>
<dbReference type="GO" id="GO:0006108">
    <property type="term" value="P:malate metabolic process"/>
    <property type="evidence" value="ECO:0007669"/>
    <property type="project" value="TreeGrafter"/>
</dbReference>
<dbReference type="CDD" id="cd05312">
    <property type="entry name" value="NAD_bind_1_malic_enz"/>
    <property type="match status" value="1"/>
</dbReference>
<dbReference type="FunFam" id="3.40.50.10380:FF:000001">
    <property type="entry name" value="NAD-dependent malic enzyme"/>
    <property type="match status" value="1"/>
</dbReference>
<dbReference type="FunFam" id="3.40.50.720:FF:000055">
    <property type="entry name" value="NAD-dependent malic enzyme"/>
    <property type="match status" value="1"/>
</dbReference>
<dbReference type="Gene3D" id="3.40.50.10380">
    <property type="entry name" value="Malic enzyme, N-terminal domain"/>
    <property type="match status" value="1"/>
</dbReference>
<dbReference type="Gene3D" id="3.40.50.720">
    <property type="entry name" value="NAD(P)-binding Rossmann-like Domain"/>
    <property type="match status" value="1"/>
</dbReference>
<dbReference type="HAMAP" id="MF_01619">
    <property type="entry name" value="NAD_malic_enz"/>
    <property type="match status" value="1"/>
</dbReference>
<dbReference type="InterPro" id="IPR046346">
    <property type="entry name" value="Aminoacid_DH-like_N_sf"/>
</dbReference>
<dbReference type="InterPro" id="IPR015884">
    <property type="entry name" value="Malic_enzyme_CS"/>
</dbReference>
<dbReference type="InterPro" id="IPR012301">
    <property type="entry name" value="Malic_N_dom"/>
</dbReference>
<dbReference type="InterPro" id="IPR037062">
    <property type="entry name" value="Malic_N_dom_sf"/>
</dbReference>
<dbReference type="InterPro" id="IPR012302">
    <property type="entry name" value="Malic_NAD-bd"/>
</dbReference>
<dbReference type="InterPro" id="IPR001891">
    <property type="entry name" value="Malic_OxRdtase"/>
</dbReference>
<dbReference type="InterPro" id="IPR036291">
    <property type="entry name" value="NAD(P)-bd_dom_sf"/>
</dbReference>
<dbReference type="InterPro" id="IPR023667">
    <property type="entry name" value="NAD_malic_enz_proteobac"/>
</dbReference>
<dbReference type="NCBIfam" id="NF010052">
    <property type="entry name" value="PRK13529.1"/>
    <property type="match status" value="1"/>
</dbReference>
<dbReference type="PANTHER" id="PTHR23406">
    <property type="entry name" value="MALIC ENZYME-RELATED"/>
    <property type="match status" value="1"/>
</dbReference>
<dbReference type="PANTHER" id="PTHR23406:SF34">
    <property type="entry name" value="NAD-DEPENDENT MALIC ENZYME, MITOCHONDRIAL"/>
    <property type="match status" value="1"/>
</dbReference>
<dbReference type="Pfam" id="PF00390">
    <property type="entry name" value="malic"/>
    <property type="match status" value="1"/>
</dbReference>
<dbReference type="Pfam" id="PF03949">
    <property type="entry name" value="Malic_M"/>
    <property type="match status" value="1"/>
</dbReference>
<dbReference type="PIRSF" id="PIRSF000106">
    <property type="entry name" value="ME"/>
    <property type="match status" value="1"/>
</dbReference>
<dbReference type="PRINTS" id="PR00072">
    <property type="entry name" value="MALOXRDTASE"/>
</dbReference>
<dbReference type="SMART" id="SM01274">
    <property type="entry name" value="malic"/>
    <property type="match status" value="1"/>
</dbReference>
<dbReference type="SMART" id="SM00919">
    <property type="entry name" value="Malic_M"/>
    <property type="match status" value="1"/>
</dbReference>
<dbReference type="SUPFAM" id="SSF53223">
    <property type="entry name" value="Aminoacid dehydrogenase-like, N-terminal domain"/>
    <property type="match status" value="1"/>
</dbReference>
<dbReference type="SUPFAM" id="SSF51735">
    <property type="entry name" value="NAD(P)-binding Rossmann-fold domains"/>
    <property type="match status" value="1"/>
</dbReference>
<dbReference type="PROSITE" id="PS00331">
    <property type="entry name" value="MALIC_ENZYMES"/>
    <property type="match status" value="1"/>
</dbReference>
<accession>Q12RA0</accession>
<name>MAO1_SHEDO</name>
<comment type="catalytic activity">
    <reaction evidence="1">
        <text>(S)-malate + NAD(+) = pyruvate + CO2 + NADH</text>
        <dbReference type="Rhea" id="RHEA:12653"/>
        <dbReference type="ChEBI" id="CHEBI:15361"/>
        <dbReference type="ChEBI" id="CHEBI:15589"/>
        <dbReference type="ChEBI" id="CHEBI:16526"/>
        <dbReference type="ChEBI" id="CHEBI:57540"/>
        <dbReference type="ChEBI" id="CHEBI:57945"/>
        <dbReference type="EC" id="1.1.1.38"/>
    </reaction>
</comment>
<comment type="catalytic activity">
    <reaction evidence="1">
        <text>oxaloacetate + H(+) = pyruvate + CO2</text>
        <dbReference type="Rhea" id="RHEA:15641"/>
        <dbReference type="ChEBI" id="CHEBI:15361"/>
        <dbReference type="ChEBI" id="CHEBI:15378"/>
        <dbReference type="ChEBI" id="CHEBI:16452"/>
        <dbReference type="ChEBI" id="CHEBI:16526"/>
        <dbReference type="EC" id="1.1.1.38"/>
    </reaction>
</comment>
<comment type="cofactor">
    <cofactor evidence="1">
        <name>Mg(2+)</name>
        <dbReference type="ChEBI" id="CHEBI:18420"/>
    </cofactor>
    <cofactor evidence="1">
        <name>Mn(2+)</name>
        <dbReference type="ChEBI" id="CHEBI:29035"/>
    </cofactor>
    <text evidence="1">Divalent metal cations. Prefers magnesium or manganese.</text>
</comment>
<comment type="subunit">
    <text evidence="1">Homotetramer.</text>
</comment>
<comment type="similarity">
    <text evidence="1">Belongs to the malic enzymes family.</text>
</comment>
<gene>
    <name evidence="1" type="primary">maeA</name>
    <name type="ordered locus">Sden_0736</name>
</gene>
<evidence type="ECO:0000255" key="1">
    <source>
        <dbReference type="HAMAP-Rule" id="MF_01619"/>
    </source>
</evidence>
<organism>
    <name type="scientific">Shewanella denitrificans (strain OS217 / ATCC BAA-1090 / DSM 15013)</name>
    <dbReference type="NCBI Taxonomy" id="318161"/>
    <lineage>
        <taxon>Bacteria</taxon>
        <taxon>Pseudomonadati</taxon>
        <taxon>Pseudomonadota</taxon>
        <taxon>Gammaproteobacteria</taxon>
        <taxon>Alteromonadales</taxon>
        <taxon>Shewanellaceae</taxon>
        <taxon>Shewanella</taxon>
    </lineage>
</organism>
<proteinExistence type="inferred from homology"/>
<protein>
    <recommendedName>
        <fullName evidence="1">NAD-dependent malic enzyme</fullName>
        <shortName evidence="1">NAD-ME</shortName>
        <ecNumber evidence="1">1.1.1.38</ecNumber>
    </recommendedName>
</protein>
<keyword id="KW-0479">Metal-binding</keyword>
<keyword id="KW-0520">NAD</keyword>
<keyword id="KW-0560">Oxidoreductase</keyword>
<keyword id="KW-1185">Reference proteome</keyword>